<reference key="1">
    <citation type="journal article" date="2007" name="J. Bacteriol.">
        <title>Complete genome of acute rheumatic fever-associated serotype M5 Streptococcus pyogenes strain Manfredo.</title>
        <authorList>
            <person name="Holden M.T.G."/>
            <person name="Scott A."/>
            <person name="Cherevach I."/>
            <person name="Chillingworth T."/>
            <person name="Churcher C."/>
            <person name="Cronin A."/>
            <person name="Dowd L."/>
            <person name="Feltwell T."/>
            <person name="Hamlin N."/>
            <person name="Holroyd S."/>
            <person name="Jagels K."/>
            <person name="Moule S."/>
            <person name="Mungall K."/>
            <person name="Quail M.A."/>
            <person name="Price C."/>
            <person name="Rabbinowitsch E."/>
            <person name="Sharp S."/>
            <person name="Skelton J."/>
            <person name="Whitehead S."/>
            <person name="Barrell B.G."/>
            <person name="Kehoe M."/>
            <person name="Parkhill J."/>
        </authorList>
    </citation>
    <scope>NUCLEOTIDE SEQUENCE [LARGE SCALE GENOMIC DNA]</scope>
    <source>
        <strain>Manfredo</strain>
    </source>
</reference>
<name>Y1747_STRPG</name>
<feature type="chain" id="PRO_1000061642" description="UPF0246 protein SpyM51747">
    <location>
        <begin position="1"/>
        <end position="243"/>
    </location>
</feature>
<organism>
    <name type="scientific">Streptococcus pyogenes serotype M5 (strain Manfredo)</name>
    <dbReference type="NCBI Taxonomy" id="160491"/>
    <lineage>
        <taxon>Bacteria</taxon>
        <taxon>Bacillati</taxon>
        <taxon>Bacillota</taxon>
        <taxon>Bacilli</taxon>
        <taxon>Lactobacillales</taxon>
        <taxon>Streptococcaceae</taxon>
        <taxon>Streptococcus</taxon>
    </lineage>
</organism>
<gene>
    <name type="ordered locus">SpyM51747</name>
</gene>
<sequence>MLTFLIPTAKEMTTPKESHPHLLPQDSQAILKIMTAMTTEDLAKSYRIKEEAAKKEQQRWQDMASQQSLAYPAYQLFNGLMYRHIKRDKLTTQEQAYLTQQVYITSSFYGIIPANHPIAEHRHDFHTRIKIEGQSLKSYWRPCYNQFAKEHPQVISLLSSEFDDVFSKDCKQLWISPKFMAEKEGQFKTHSTISKKARGAFLTACMENNCQTVDSLKSLVFAGFYYHPDLSTDYEFVYIKKEA</sequence>
<accession>A2RGT7</accession>
<evidence type="ECO:0000255" key="1">
    <source>
        <dbReference type="HAMAP-Rule" id="MF_00652"/>
    </source>
</evidence>
<dbReference type="EMBL" id="AM295007">
    <property type="protein sequence ID" value="CAM31069.1"/>
    <property type="molecule type" value="Genomic_DNA"/>
</dbReference>
<dbReference type="RefSeq" id="WP_011889219.1">
    <property type="nucleotide sequence ID" value="NC_009332.1"/>
</dbReference>
<dbReference type="SMR" id="A2RGT7"/>
<dbReference type="KEGG" id="spf:SpyM51747"/>
<dbReference type="HOGENOM" id="CLU_061989_2_1_9"/>
<dbReference type="GO" id="GO:0005829">
    <property type="term" value="C:cytosol"/>
    <property type="evidence" value="ECO:0007669"/>
    <property type="project" value="TreeGrafter"/>
</dbReference>
<dbReference type="GO" id="GO:0033194">
    <property type="term" value="P:response to hydroperoxide"/>
    <property type="evidence" value="ECO:0007669"/>
    <property type="project" value="TreeGrafter"/>
</dbReference>
<dbReference type="HAMAP" id="MF_00652">
    <property type="entry name" value="UPF0246"/>
    <property type="match status" value="1"/>
</dbReference>
<dbReference type="InterPro" id="IPR005583">
    <property type="entry name" value="YaaA"/>
</dbReference>
<dbReference type="NCBIfam" id="NF002543">
    <property type="entry name" value="PRK02101.1-4"/>
    <property type="match status" value="1"/>
</dbReference>
<dbReference type="PANTHER" id="PTHR30283:SF4">
    <property type="entry name" value="PEROXIDE STRESS RESISTANCE PROTEIN YAAA"/>
    <property type="match status" value="1"/>
</dbReference>
<dbReference type="PANTHER" id="PTHR30283">
    <property type="entry name" value="PEROXIDE STRESS RESPONSE PROTEIN YAAA"/>
    <property type="match status" value="1"/>
</dbReference>
<dbReference type="Pfam" id="PF03883">
    <property type="entry name" value="H2O2_YaaD"/>
    <property type="match status" value="1"/>
</dbReference>
<comment type="similarity">
    <text evidence="1">Belongs to the UPF0246 family.</text>
</comment>
<protein>
    <recommendedName>
        <fullName evidence="1">UPF0246 protein SpyM51747</fullName>
    </recommendedName>
</protein>
<proteinExistence type="inferred from homology"/>